<keyword id="KW-0687">Ribonucleoprotein</keyword>
<keyword id="KW-0689">Ribosomal protein</keyword>
<keyword id="KW-0694">RNA-binding</keyword>
<keyword id="KW-0699">rRNA-binding</keyword>
<name>RS11_RHIE6</name>
<comment type="function">
    <text evidence="1">Located on the platform of the 30S subunit, it bridges several disparate RNA helices of the 16S rRNA. Forms part of the Shine-Dalgarno cleft in the 70S ribosome.</text>
</comment>
<comment type="subunit">
    <text evidence="1">Part of the 30S ribosomal subunit. Interacts with proteins S7 and S18. Binds to IF-3.</text>
</comment>
<comment type="similarity">
    <text evidence="1">Belongs to the universal ribosomal protein uS11 family.</text>
</comment>
<evidence type="ECO:0000255" key="1">
    <source>
        <dbReference type="HAMAP-Rule" id="MF_01310"/>
    </source>
</evidence>
<evidence type="ECO:0000305" key="2"/>
<accession>B3PWU4</accession>
<reference key="1">
    <citation type="journal article" date="2010" name="Appl. Environ. Microbiol.">
        <title>Conserved symbiotic plasmid DNA sequences in the multireplicon pangenomic structure of Rhizobium etli.</title>
        <authorList>
            <person name="Gonzalez V."/>
            <person name="Acosta J.L."/>
            <person name="Santamaria R.I."/>
            <person name="Bustos P."/>
            <person name="Fernandez J.L."/>
            <person name="Hernandez Gonzalez I.L."/>
            <person name="Diaz R."/>
            <person name="Flores M."/>
            <person name="Palacios R."/>
            <person name="Mora J."/>
            <person name="Davila G."/>
        </authorList>
    </citation>
    <scope>NUCLEOTIDE SEQUENCE [LARGE SCALE GENOMIC DNA]</scope>
    <source>
        <strain>CIAT 652</strain>
    </source>
</reference>
<gene>
    <name evidence="1" type="primary">rpsK</name>
    <name type="ordered locus">RHECIAT_CH0001772</name>
</gene>
<proteinExistence type="inferred from homology"/>
<sequence length="129" mass="13893">MAKEAVRVRRRERKNISSGVAHVNSTFNNTMITITDAQGNAIAWSSAGAKGFKGSRKSTPFAAQIAAEDCAKKAQEHGMKSLEVEVCGPGSGRESALRALQAAGFMITSIRDVTPIPHNGCRPRKKRRV</sequence>
<dbReference type="EMBL" id="CP001074">
    <property type="protein sequence ID" value="ACE90742.1"/>
    <property type="molecule type" value="Genomic_DNA"/>
</dbReference>
<dbReference type="SMR" id="B3PWU4"/>
<dbReference type="KEGG" id="rec:RHECIAT_CH0001772"/>
<dbReference type="eggNOG" id="COG0100">
    <property type="taxonomic scope" value="Bacteria"/>
</dbReference>
<dbReference type="HOGENOM" id="CLU_072439_5_0_5"/>
<dbReference type="Proteomes" id="UP000008817">
    <property type="component" value="Chromosome"/>
</dbReference>
<dbReference type="GO" id="GO:1990904">
    <property type="term" value="C:ribonucleoprotein complex"/>
    <property type="evidence" value="ECO:0007669"/>
    <property type="project" value="UniProtKB-KW"/>
</dbReference>
<dbReference type="GO" id="GO:0005840">
    <property type="term" value="C:ribosome"/>
    <property type="evidence" value="ECO:0007669"/>
    <property type="project" value="UniProtKB-KW"/>
</dbReference>
<dbReference type="GO" id="GO:0019843">
    <property type="term" value="F:rRNA binding"/>
    <property type="evidence" value="ECO:0007669"/>
    <property type="project" value="UniProtKB-UniRule"/>
</dbReference>
<dbReference type="GO" id="GO:0003735">
    <property type="term" value="F:structural constituent of ribosome"/>
    <property type="evidence" value="ECO:0007669"/>
    <property type="project" value="InterPro"/>
</dbReference>
<dbReference type="GO" id="GO:0006412">
    <property type="term" value="P:translation"/>
    <property type="evidence" value="ECO:0007669"/>
    <property type="project" value="UniProtKB-UniRule"/>
</dbReference>
<dbReference type="FunFam" id="3.30.420.80:FF:000001">
    <property type="entry name" value="30S ribosomal protein S11"/>
    <property type="match status" value="1"/>
</dbReference>
<dbReference type="Gene3D" id="3.30.420.80">
    <property type="entry name" value="Ribosomal protein S11"/>
    <property type="match status" value="1"/>
</dbReference>
<dbReference type="HAMAP" id="MF_01310">
    <property type="entry name" value="Ribosomal_uS11"/>
    <property type="match status" value="1"/>
</dbReference>
<dbReference type="InterPro" id="IPR001971">
    <property type="entry name" value="Ribosomal_uS11"/>
</dbReference>
<dbReference type="InterPro" id="IPR019981">
    <property type="entry name" value="Ribosomal_uS11_bac-type"/>
</dbReference>
<dbReference type="InterPro" id="IPR018102">
    <property type="entry name" value="Ribosomal_uS11_CS"/>
</dbReference>
<dbReference type="InterPro" id="IPR036967">
    <property type="entry name" value="Ribosomal_uS11_sf"/>
</dbReference>
<dbReference type="NCBIfam" id="NF003698">
    <property type="entry name" value="PRK05309.1"/>
    <property type="match status" value="1"/>
</dbReference>
<dbReference type="NCBIfam" id="TIGR03632">
    <property type="entry name" value="uS11_bact"/>
    <property type="match status" value="1"/>
</dbReference>
<dbReference type="PANTHER" id="PTHR11759">
    <property type="entry name" value="40S RIBOSOMAL PROTEIN S14/30S RIBOSOMAL PROTEIN S11"/>
    <property type="match status" value="1"/>
</dbReference>
<dbReference type="Pfam" id="PF00411">
    <property type="entry name" value="Ribosomal_S11"/>
    <property type="match status" value="1"/>
</dbReference>
<dbReference type="PIRSF" id="PIRSF002131">
    <property type="entry name" value="Ribosomal_S11"/>
    <property type="match status" value="1"/>
</dbReference>
<dbReference type="SUPFAM" id="SSF53137">
    <property type="entry name" value="Translational machinery components"/>
    <property type="match status" value="1"/>
</dbReference>
<dbReference type="PROSITE" id="PS00054">
    <property type="entry name" value="RIBOSOMAL_S11"/>
    <property type="match status" value="1"/>
</dbReference>
<organism>
    <name type="scientific">Rhizobium etli (strain CIAT 652)</name>
    <dbReference type="NCBI Taxonomy" id="491916"/>
    <lineage>
        <taxon>Bacteria</taxon>
        <taxon>Pseudomonadati</taxon>
        <taxon>Pseudomonadota</taxon>
        <taxon>Alphaproteobacteria</taxon>
        <taxon>Hyphomicrobiales</taxon>
        <taxon>Rhizobiaceae</taxon>
        <taxon>Rhizobium/Agrobacterium group</taxon>
        <taxon>Rhizobium</taxon>
    </lineage>
</organism>
<protein>
    <recommendedName>
        <fullName evidence="1">Small ribosomal subunit protein uS11</fullName>
    </recommendedName>
    <alternativeName>
        <fullName evidence="2">30S ribosomal protein S11</fullName>
    </alternativeName>
</protein>
<feature type="chain" id="PRO_1000141130" description="Small ribosomal subunit protein uS11">
    <location>
        <begin position="1"/>
        <end position="129"/>
    </location>
</feature>